<reference key="1">
    <citation type="journal article" date="2005" name="Science">
        <title>The transcriptional landscape of the mammalian genome.</title>
        <authorList>
            <person name="Carninci P."/>
            <person name="Kasukawa T."/>
            <person name="Katayama S."/>
            <person name="Gough J."/>
            <person name="Frith M.C."/>
            <person name="Maeda N."/>
            <person name="Oyama R."/>
            <person name="Ravasi T."/>
            <person name="Lenhard B."/>
            <person name="Wells C."/>
            <person name="Kodzius R."/>
            <person name="Shimokawa K."/>
            <person name="Bajic V.B."/>
            <person name="Brenner S.E."/>
            <person name="Batalov S."/>
            <person name="Forrest A.R."/>
            <person name="Zavolan M."/>
            <person name="Davis M.J."/>
            <person name="Wilming L.G."/>
            <person name="Aidinis V."/>
            <person name="Allen J.E."/>
            <person name="Ambesi-Impiombato A."/>
            <person name="Apweiler R."/>
            <person name="Aturaliya R.N."/>
            <person name="Bailey T.L."/>
            <person name="Bansal M."/>
            <person name="Baxter L."/>
            <person name="Beisel K.W."/>
            <person name="Bersano T."/>
            <person name="Bono H."/>
            <person name="Chalk A.M."/>
            <person name="Chiu K.P."/>
            <person name="Choudhary V."/>
            <person name="Christoffels A."/>
            <person name="Clutterbuck D.R."/>
            <person name="Crowe M.L."/>
            <person name="Dalla E."/>
            <person name="Dalrymple B.P."/>
            <person name="de Bono B."/>
            <person name="Della Gatta G."/>
            <person name="di Bernardo D."/>
            <person name="Down T."/>
            <person name="Engstrom P."/>
            <person name="Fagiolini M."/>
            <person name="Faulkner G."/>
            <person name="Fletcher C.F."/>
            <person name="Fukushima T."/>
            <person name="Furuno M."/>
            <person name="Futaki S."/>
            <person name="Gariboldi M."/>
            <person name="Georgii-Hemming P."/>
            <person name="Gingeras T.R."/>
            <person name="Gojobori T."/>
            <person name="Green R.E."/>
            <person name="Gustincich S."/>
            <person name="Harbers M."/>
            <person name="Hayashi Y."/>
            <person name="Hensch T.K."/>
            <person name="Hirokawa N."/>
            <person name="Hill D."/>
            <person name="Huminiecki L."/>
            <person name="Iacono M."/>
            <person name="Ikeo K."/>
            <person name="Iwama A."/>
            <person name="Ishikawa T."/>
            <person name="Jakt M."/>
            <person name="Kanapin A."/>
            <person name="Katoh M."/>
            <person name="Kawasawa Y."/>
            <person name="Kelso J."/>
            <person name="Kitamura H."/>
            <person name="Kitano H."/>
            <person name="Kollias G."/>
            <person name="Krishnan S.P."/>
            <person name="Kruger A."/>
            <person name="Kummerfeld S.K."/>
            <person name="Kurochkin I.V."/>
            <person name="Lareau L.F."/>
            <person name="Lazarevic D."/>
            <person name="Lipovich L."/>
            <person name="Liu J."/>
            <person name="Liuni S."/>
            <person name="McWilliam S."/>
            <person name="Madan Babu M."/>
            <person name="Madera M."/>
            <person name="Marchionni L."/>
            <person name="Matsuda H."/>
            <person name="Matsuzawa S."/>
            <person name="Miki H."/>
            <person name="Mignone F."/>
            <person name="Miyake S."/>
            <person name="Morris K."/>
            <person name="Mottagui-Tabar S."/>
            <person name="Mulder N."/>
            <person name="Nakano N."/>
            <person name="Nakauchi H."/>
            <person name="Ng P."/>
            <person name="Nilsson R."/>
            <person name="Nishiguchi S."/>
            <person name="Nishikawa S."/>
            <person name="Nori F."/>
            <person name="Ohara O."/>
            <person name="Okazaki Y."/>
            <person name="Orlando V."/>
            <person name="Pang K.C."/>
            <person name="Pavan W.J."/>
            <person name="Pavesi G."/>
            <person name="Pesole G."/>
            <person name="Petrovsky N."/>
            <person name="Piazza S."/>
            <person name="Reed J."/>
            <person name="Reid J.F."/>
            <person name="Ring B.Z."/>
            <person name="Ringwald M."/>
            <person name="Rost B."/>
            <person name="Ruan Y."/>
            <person name="Salzberg S.L."/>
            <person name="Sandelin A."/>
            <person name="Schneider C."/>
            <person name="Schoenbach C."/>
            <person name="Sekiguchi K."/>
            <person name="Semple C.A."/>
            <person name="Seno S."/>
            <person name="Sessa L."/>
            <person name="Sheng Y."/>
            <person name="Shibata Y."/>
            <person name="Shimada H."/>
            <person name="Shimada K."/>
            <person name="Silva D."/>
            <person name="Sinclair B."/>
            <person name="Sperling S."/>
            <person name="Stupka E."/>
            <person name="Sugiura K."/>
            <person name="Sultana R."/>
            <person name="Takenaka Y."/>
            <person name="Taki K."/>
            <person name="Tammoja K."/>
            <person name="Tan S.L."/>
            <person name="Tang S."/>
            <person name="Taylor M.S."/>
            <person name="Tegner J."/>
            <person name="Teichmann S.A."/>
            <person name="Ueda H.R."/>
            <person name="van Nimwegen E."/>
            <person name="Verardo R."/>
            <person name="Wei C.L."/>
            <person name="Yagi K."/>
            <person name="Yamanishi H."/>
            <person name="Zabarovsky E."/>
            <person name="Zhu S."/>
            <person name="Zimmer A."/>
            <person name="Hide W."/>
            <person name="Bult C."/>
            <person name="Grimmond S.M."/>
            <person name="Teasdale R.D."/>
            <person name="Liu E.T."/>
            <person name="Brusic V."/>
            <person name="Quackenbush J."/>
            <person name="Wahlestedt C."/>
            <person name="Mattick J.S."/>
            <person name="Hume D.A."/>
            <person name="Kai C."/>
            <person name="Sasaki D."/>
            <person name="Tomaru Y."/>
            <person name="Fukuda S."/>
            <person name="Kanamori-Katayama M."/>
            <person name="Suzuki M."/>
            <person name="Aoki J."/>
            <person name="Arakawa T."/>
            <person name="Iida J."/>
            <person name="Imamura K."/>
            <person name="Itoh M."/>
            <person name="Kato T."/>
            <person name="Kawaji H."/>
            <person name="Kawagashira N."/>
            <person name="Kawashima T."/>
            <person name="Kojima M."/>
            <person name="Kondo S."/>
            <person name="Konno H."/>
            <person name="Nakano K."/>
            <person name="Ninomiya N."/>
            <person name="Nishio T."/>
            <person name="Okada M."/>
            <person name="Plessy C."/>
            <person name="Shibata K."/>
            <person name="Shiraki T."/>
            <person name="Suzuki S."/>
            <person name="Tagami M."/>
            <person name="Waki K."/>
            <person name="Watahiki A."/>
            <person name="Okamura-Oho Y."/>
            <person name="Suzuki H."/>
            <person name="Kawai J."/>
            <person name="Hayashizaki Y."/>
        </authorList>
    </citation>
    <scope>NUCLEOTIDE SEQUENCE [LARGE SCALE MRNA]</scope>
    <source>
        <strain>C57BL/6J</strain>
        <tissue>Thymus</tissue>
    </source>
</reference>
<reference key="2">
    <citation type="journal article" date="2009" name="PLoS Biol.">
        <title>Lineage-specific biology revealed by a finished genome assembly of the mouse.</title>
        <authorList>
            <person name="Church D.M."/>
            <person name="Goodstadt L."/>
            <person name="Hillier L.W."/>
            <person name="Zody M.C."/>
            <person name="Goldstein S."/>
            <person name="She X."/>
            <person name="Bult C.J."/>
            <person name="Agarwala R."/>
            <person name="Cherry J.L."/>
            <person name="DiCuccio M."/>
            <person name="Hlavina W."/>
            <person name="Kapustin Y."/>
            <person name="Meric P."/>
            <person name="Maglott D."/>
            <person name="Birtle Z."/>
            <person name="Marques A.C."/>
            <person name="Graves T."/>
            <person name="Zhou S."/>
            <person name="Teague B."/>
            <person name="Potamousis K."/>
            <person name="Churas C."/>
            <person name="Place M."/>
            <person name="Herschleb J."/>
            <person name="Runnheim R."/>
            <person name="Forrest D."/>
            <person name="Amos-Landgraf J."/>
            <person name="Schwartz D.C."/>
            <person name="Cheng Z."/>
            <person name="Lindblad-Toh K."/>
            <person name="Eichler E.E."/>
            <person name="Ponting C.P."/>
        </authorList>
    </citation>
    <scope>NUCLEOTIDE SEQUENCE [LARGE SCALE GENOMIC DNA]</scope>
    <source>
        <strain>C57BL/6J</strain>
    </source>
</reference>
<name>RN207_MOUSE</name>
<gene>
    <name type="primary">Rnf207</name>
    <name type="synonym">Gm143</name>
</gene>
<keyword id="KW-0175">Coiled coil</keyword>
<keyword id="KW-0963">Cytoplasm</keyword>
<keyword id="KW-0479">Metal-binding</keyword>
<keyword id="KW-1185">Reference proteome</keyword>
<keyword id="KW-0862">Zinc</keyword>
<keyword id="KW-0863">Zinc-finger</keyword>
<organism>
    <name type="scientific">Mus musculus</name>
    <name type="common">Mouse</name>
    <dbReference type="NCBI Taxonomy" id="10090"/>
    <lineage>
        <taxon>Eukaryota</taxon>
        <taxon>Metazoa</taxon>
        <taxon>Chordata</taxon>
        <taxon>Craniata</taxon>
        <taxon>Vertebrata</taxon>
        <taxon>Euteleostomi</taxon>
        <taxon>Mammalia</taxon>
        <taxon>Eutheria</taxon>
        <taxon>Euarchontoglires</taxon>
        <taxon>Glires</taxon>
        <taxon>Rodentia</taxon>
        <taxon>Myomorpha</taxon>
        <taxon>Muroidea</taxon>
        <taxon>Muridae</taxon>
        <taxon>Murinae</taxon>
        <taxon>Mus</taxon>
        <taxon>Mus</taxon>
    </lineage>
</organism>
<dbReference type="EMBL" id="AK042379">
    <property type="protein sequence ID" value="BAE20631.1"/>
    <property type="status" value="ALT_SEQ"/>
    <property type="molecule type" value="mRNA"/>
</dbReference>
<dbReference type="EMBL" id="AL611985">
    <property type="status" value="NOT_ANNOTATED_CDS"/>
    <property type="molecule type" value="Genomic_DNA"/>
</dbReference>
<dbReference type="CCDS" id="CCDS51393.1"/>
<dbReference type="RefSeq" id="NP_001028661.2">
    <property type="nucleotide sequence ID" value="NM_001033489.2"/>
</dbReference>
<dbReference type="FunCoup" id="Q3V3A7">
    <property type="interactions" value="268"/>
</dbReference>
<dbReference type="STRING" id="10090.ENSMUSP00000075540"/>
<dbReference type="iPTMnet" id="Q3V3A7"/>
<dbReference type="PhosphoSitePlus" id="Q3V3A7"/>
<dbReference type="PaxDb" id="10090-ENSMUSP00000075540"/>
<dbReference type="ProteomicsDB" id="299844"/>
<dbReference type="Antibodypedia" id="27241">
    <property type="antibodies" value="111 antibodies from 17 providers"/>
</dbReference>
<dbReference type="Ensembl" id="ENSMUST00000076183.12">
    <property type="protein sequence ID" value="ENSMUSP00000075540.6"/>
    <property type="gene ID" value="ENSMUSG00000058498.13"/>
</dbReference>
<dbReference type="GeneID" id="433809"/>
<dbReference type="KEGG" id="mmu:433809"/>
<dbReference type="UCSC" id="uc008waf.2">
    <property type="organism name" value="mouse"/>
</dbReference>
<dbReference type="AGR" id="MGI:2684989"/>
<dbReference type="CTD" id="388591"/>
<dbReference type="MGI" id="MGI:2684989">
    <property type="gene designation" value="Rnf207"/>
</dbReference>
<dbReference type="VEuPathDB" id="HostDB:ENSMUSG00000058498"/>
<dbReference type="eggNOG" id="KOG4367">
    <property type="taxonomic scope" value="Eukaryota"/>
</dbReference>
<dbReference type="GeneTree" id="ENSGT00510000048612"/>
<dbReference type="InParanoid" id="Q3V3A7"/>
<dbReference type="OMA" id="YEDSYRH"/>
<dbReference type="OrthoDB" id="9049620at2759"/>
<dbReference type="PhylomeDB" id="Q3V3A7"/>
<dbReference type="TreeFam" id="TF318184"/>
<dbReference type="BioGRID-ORCS" id="433809">
    <property type="hits" value="1 hit in 78 CRISPR screens"/>
</dbReference>
<dbReference type="PRO" id="PR:Q3V3A7"/>
<dbReference type="Proteomes" id="UP000000589">
    <property type="component" value="Chromosome 4"/>
</dbReference>
<dbReference type="RNAct" id="Q3V3A7">
    <property type="molecule type" value="protein"/>
</dbReference>
<dbReference type="Bgee" id="ENSMUSG00000058498">
    <property type="expression patterns" value="Expressed in retinal neural layer and 118 other cell types or tissues"/>
</dbReference>
<dbReference type="ExpressionAtlas" id="Q3V3A7">
    <property type="expression patterns" value="baseline and differential"/>
</dbReference>
<dbReference type="GO" id="GO:0048471">
    <property type="term" value="C:perinuclear region of cytoplasm"/>
    <property type="evidence" value="ECO:0007669"/>
    <property type="project" value="Ensembl"/>
</dbReference>
<dbReference type="GO" id="GO:0030544">
    <property type="term" value="F:Hsp70 protein binding"/>
    <property type="evidence" value="ECO:0007669"/>
    <property type="project" value="Ensembl"/>
</dbReference>
<dbReference type="GO" id="GO:0044325">
    <property type="term" value="F:transmembrane transporter binding"/>
    <property type="evidence" value="ECO:0007669"/>
    <property type="project" value="Ensembl"/>
</dbReference>
<dbReference type="GO" id="GO:0008270">
    <property type="term" value="F:zinc ion binding"/>
    <property type="evidence" value="ECO:0007669"/>
    <property type="project" value="UniProtKB-KW"/>
</dbReference>
<dbReference type="GO" id="GO:0010628">
    <property type="term" value="P:positive regulation of gene expression"/>
    <property type="evidence" value="ECO:0007669"/>
    <property type="project" value="Ensembl"/>
</dbReference>
<dbReference type="GO" id="GO:1905026">
    <property type="term" value="P:positive regulation of membrane repolarization during ventricular cardiac muscle cell action potential"/>
    <property type="evidence" value="ECO:0007669"/>
    <property type="project" value="Ensembl"/>
</dbReference>
<dbReference type="CDD" id="cd19814">
    <property type="entry name" value="Bbox1_RNF207-like"/>
    <property type="match status" value="1"/>
</dbReference>
<dbReference type="CDD" id="cd16558">
    <property type="entry name" value="RING-HC_RNF207"/>
    <property type="match status" value="1"/>
</dbReference>
<dbReference type="FunFam" id="1.20.58.1540:FF:000002">
    <property type="entry name" value="Ring finger protein 207"/>
    <property type="match status" value="1"/>
</dbReference>
<dbReference type="FunFam" id="3.30.40.10:FF:000478">
    <property type="entry name" value="Ring finger protein 207"/>
    <property type="match status" value="1"/>
</dbReference>
<dbReference type="Gene3D" id="1.20.58.1540">
    <property type="entry name" value="Actin interacting protein 3, C-terminal domain"/>
    <property type="match status" value="1"/>
</dbReference>
<dbReference type="Gene3D" id="3.30.160.60">
    <property type="entry name" value="Classic Zinc Finger"/>
    <property type="match status" value="1"/>
</dbReference>
<dbReference type="Gene3D" id="3.30.40.10">
    <property type="entry name" value="Zinc/RING finger domain, C3HC4 (zinc finger)"/>
    <property type="match status" value="1"/>
</dbReference>
<dbReference type="InterPro" id="IPR021978">
    <property type="entry name" value="PML-like_CC"/>
</dbReference>
<dbReference type="InterPro" id="IPR039320">
    <property type="entry name" value="RNF207"/>
</dbReference>
<dbReference type="InterPro" id="IPR000315">
    <property type="entry name" value="Znf_B-box"/>
</dbReference>
<dbReference type="InterPro" id="IPR018957">
    <property type="entry name" value="Znf_C3HC4_RING-type"/>
</dbReference>
<dbReference type="InterPro" id="IPR001841">
    <property type="entry name" value="Znf_RING"/>
</dbReference>
<dbReference type="InterPro" id="IPR013083">
    <property type="entry name" value="Znf_RING/FYVE/PHD"/>
</dbReference>
<dbReference type="InterPro" id="IPR017907">
    <property type="entry name" value="Znf_RING_CS"/>
</dbReference>
<dbReference type="PANTHER" id="PTHR22635">
    <property type="entry name" value="RING FINGER PROTEIN 207"/>
    <property type="match status" value="1"/>
</dbReference>
<dbReference type="PANTHER" id="PTHR22635:SF0">
    <property type="entry name" value="RING FINGER PROTEIN 207"/>
    <property type="match status" value="1"/>
</dbReference>
<dbReference type="Pfam" id="PF12126">
    <property type="entry name" value="PML_CC"/>
    <property type="match status" value="1"/>
</dbReference>
<dbReference type="Pfam" id="PF00643">
    <property type="entry name" value="zf-B_box"/>
    <property type="match status" value="1"/>
</dbReference>
<dbReference type="Pfam" id="PF00097">
    <property type="entry name" value="zf-C3HC4"/>
    <property type="match status" value="1"/>
</dbReference>
<dbReference type="SMART" id="SM00336">
    <property type="entry name" value="BBOX"/>
    <property type="match status" value="1"/>
</dbReference>
<dbReference type="SMART" id="SM00184">
    <property type="entry name" value="RING"/>
    <property type="match status" value="1"/>
</dbReference>
<dbReference type="SUPFAM" id="SSF57850">
    <property type="entry name" value="RING/U-box"/>
    <property type="match status" value="1"/>
</dbReference>
<dbReference type="PROSITE" id="PS50119">
    <property type="entry name" value="ZF_BBOX"/>
    <property type="match status" value="1"/>
</dbReference>
<dbReference type="PROSITE" id="PS00518">
    <property type="entry name" value="ZF_RING_1"/>
    <property type="match status" value="1"/>
</dbReference>
<dbReference type="PROSITE" id="PS50089">
    <property type="entry name" value="ZF_RING_2"/>
    <property type="match status" value="1"/>
</dbReference>
<protein>
    <recommendedName>
        <fullName>RING finger protein 207</fullName>
    </recommendedName>
</protein>
<evidence type="ECO:0000250" key="1">
    <source>
        <dbReference type="UniProtKB" id="Q6ZRF8"/>
    </source>
</evidence>
<evidence type="ECO:0000255" key="2"/>
<evidence type="ECO:0000255" key="3">
    <source>
        <dbReference type="PROSITE-ProRule" id="PRU00024"/>
    </source>
</evidence>
<evidence type="ECO:0000255" key="4">
    <source>
        <dbReference type="PROSITE-ProRule" id="PRU00175"/>
    </source>
</evidence>
<evidence type="ECO:0000256" key="5">
    <source>
        <dbReference type="SAM" id="MobiDB-lite"/>
    </source>
</evidence>
<evidence type="ECO:0000305" key="6"/>
<feature type="chain" id="PRO_0000300810" description="RING finger protein 207">
    <location>
        <begin position="1"/>
        <end position="635"/>
    </location>
</feature>
<feature type="zinc finger region" description="RING-type" evidence="4">
    <location>
        <begin position="25"/>
        <end position="64"/>
    </location>
</feature>
<feature type="zinc finger region" description="B box-type; atypical" evidence="3">
    <location>
        <begin position="93"/>
        <end position="145"/>
    </location>
</feature>
<feature type="region of interest" description="Disordered" evidence="5">
    <location>
        <begin position="553"/>
        <end position="635"/>
    </location>
</feature>
<feature type="coiled-coil region" evidence="2">
    <location>
        <begin position="422"/>
        <end position="460"/>
    </location>
</feature>
<feature type="compositionally biased region" description="Basic and acidic residues" evidence="5">
    <location>
        <begin position="553"/>
        <end position="562"/>
    </location>
</feature>
<feature type="compositionally biased region" description="Polar residues" evidence="5">
    <location>
        <begin position="589"/>
        <end position="598"/>
    </location>
</feature>
<feature type="compositionally biased region" description="Basic and acidic residues" evidence="5">
    <location>
        <begin position="607"/>
        <end position="622"/>
    </location>
</feature>
<feature type="binding site" evidence="3">
    <location>
        <position position="98"/>
    </location>
    <ligand>
        <name>Zn(2+)</name>
        <dbReference type="ChEBI" id="CHEBI:29105"/>
    </ligand>
</feature>
<feature type="binding site" evidence="3">
    <location>
        <position position="101"/>
    </location>
    <ligand>
        <name>Zn(2+)</name>
        <dbReference type="ChEBI" id="CHEBI:29105"/>
    </ligand>
</feature>
<feature type="binding site" evidence="3">
    <location>
        <position position="127"/>
    </location>
    <ligand>
        <name>Zn(2+)</name>
        <dbReference type="ChEBI" id="CHEBI:29105"/>
    </ligand>
</feature>
<feature type="binding site" evidence="3">
    <location>
        <position position="132"/>
    </location>
    <ligand>
        <name>Zn(2+)</name>
        <dbReference type="ChEBI" id="CHEBI:29105"/>
    </ligand>
</feature>
<proteinExistence type="evidence at transcript level"/>
<comment type="function">
    <text evidence="1">Plays a role in cardiac repolarization possibly by stabilizing membrane expression of the potassium channel KCNH2/HERG, or by assisting its synthesis, folding or export from the endoplasmic reticulum, in a heat shock protein-dependent manner.</text>
</comment>
<comment type="subunit">
    <text evidence="1">Interacts with the core-glycosylated, but not the fully glycosylated form of KCNH2/HERG. Interacts with DNAJA1 and HSPA8. Interacts (via the C-terminus) with HSPA1A; this interaction additively increases KCNH2 expression.</text>
</comment>
<comment type="subcellular location">
    <subcellularLocation>
        <location evidence="1">Cytoplasm</location>
    </subcellularLocation>
    <text evidence="1">Probably located in the endoplasmic reticulum and/or possibly the cis-Golgi apparatus.</text>
</comment>
<comment type="sequence caution" evidence="6">
    <conflict type="erroneous termination">
        <sequence resource="EMBL-CDS" id="BAE20631"/>
    </conflict>
    <text>Truncated C-terminus.</text>
</comment>
<sequence>MSGAIFAPLEGLSALDAASGHPLVCPLCHGQYERPCLLDCFHDFCTGCLRGRATDGRLSCPLCQHQTLVKGPSGLPPVDRLLQFLVDSSGDGSEAVRCANCDLECSQQDAETTYFCNTCGQPLCARCREETHRARMFARHDIVALGQRSRDVIQKCTLHSEPYIMFSTDKKSLLCIRCFRDMQGESRAHCVDLESAYVQGCERLEQAVLAVKALQTATKEAIALLQSMVEEVRHSAAEEEAAIHALFGSMQDRMAERKALLLQTVQSQYEEKDKAFKEQLTHLASLLPTLQVHLVICSSFLSLASKAEFLDLGYELMERLQGIVTRPHRLRPAQSSKIASDHRAEFARCLEPLLLLGPRREVSTVGGANTLSGGSSPMVLKTPSCPSPVGKMSGSPVQKPSPHRFISTKVLLAEGEDTPFTEHCRHYEDSYRGLQVEVQNLKDQVQELHRDLTKHHSLIKAEIMGDILRRSLLLDTQIASEYASLEGRRAIFQEIWEDSYQRVATQQEIYEAQLRDLLQLRQENAYLTIVTKQITPYIRSIARVKERLEPRFQVPVDEHAEHGQNMYDETPGRTDPGCTTEKRDKASEPNGSSWSLSSLPEGPSLKNQDHLRPKLEAGDEGWRAGSGSKGACYQA</sequence>
<accession>Q3V3A7</accession>
<accession>A6PW94</accession>